<name>SDS22_CAEEL</name>
<feature type="chain" id="PRO_0000065456" description="Protein phosphatase 1 regulatory subunit SDS22 homolog">
    <location>
        <begin position="1"/>
        <end position="326"/>
    </location>
</feature>
<feature type="repeat" description="LRR 1">
    <location>
        <begin position="35"/>
        <end position="57"/>
    </location>
</feature>
<feature type="repeat" description="LRR 2">
    <location>
        <begin position="58"/>
        <end position="80"/>
    </location>
</feature>
<feature type="repeat" description="LRR 3">
    <location>
        <begin position="81"/>
        <end position="102"/>
    </location>
</feature>
<feature type="repeat" description="LRR 4">
    <location>
        <begin position="103"/>
        <end position="126"/>
    </location>
</feature>
<feature type="repeat" description="LRR 5">
    <location>
        <begin position="128"/>
        <end position="146"/>
    </location>
</feature>
<feature type="repeat" description="LRR 6">
    <location>
        <begin position="147"/>
        <end position="170"/>
    </location>
</feature>
<feature type="repeat" description="LRR 7">
    <location>
        <begin position="172"/>
        <end position="190"/>
    </location>
</feature>
<feature type="repeat" description="LRR 8">
    <location>
        <begin position="191"/>
        <end position="212"/>
    </location>
</feature>
<feature type="repeat" description="LRR 9">
    <location>
        <begin position="213"/>
        <end position="236"/>
    </location>
</feature>
<feature type="repeat" description="LRR 10">
    <location>
        <begin position="238"/>
        <end position="256"/>
    </location>
</feature>
<feature type="repeat" description="LRR 11">
    <location>
        <begin position="257"/>
        <end position="280"/>
    </location>
</feature>
<feature type="repeat" description="LRR 12">
    <location>
        <begin position="281"/>
        <end position="304"/>
    </location>
</feature>
<feature type="region of interest" description="Disordered" evidence="2">
    <location>
        <begin position="1"/>
        <end position="22"/>
    </location>
</feature>
<evidence type="ECO:0000250" key="1"/>
<evidence type="ECO:0000256" key="2">
    <source>
        <dbReference type="SAM" id="MobiDB-lite"/>
    </source>
</evidence>
<evidence type="ECO:0000305" key="3"/>
<sequence length="326" mass="37360">MSNDKSAEVVVLPRENDEESKEPVLKNQFDLSTFDIDSPEIDLTHTRADHIPDLTGFPKIEELRMRNNLLVSISPTISSLVTLTSLDLYENQLTEISHLESLVNLVSLDLSYNRIRQINGLDKLTKLETLYLVSNKIEKIENLEALTQLKLLELGDNRIKKIENIGHLVNLDELFIGKNKIRQLEGVETLQKLSVLSLPGNRIVKIENVEQLNNLKELYLSDQGLQDIHGVEPLTNLLLLDVANNEIKTFSGVERLESLNDFWANDNKVESFSEIEQLSKLKGLQTVYLERNPFYFNDTNQYRRKVMMTLTQVTQIDATTCRKPIE</sequence>
<dbReference type="EMBL" id="Z36753">
    <property type="protein sequence ID" value="CAA85336.1"/>
    <property type="molecule type" value="Genomic_DNA"/>
</dbReference>
<dbReference type="PIR" id="T24722">
    <property type="entry name" value="T24722"/>
</dbReference>
<dbReference type="RefSeq" id="NP_495653.1">
    <property type="nucleotide sequence ID" value="NM_063252.6"/>
</dbReference>
<dbReference type="SMR" id="P45969"/>
<dbReference type="BioGRID" id="39599">
    <property type="interactions" value="9"/>
</dbReference>
<dbReference type="FunCoup" id="P45969">
    <property type="interactions" value="211"/>
</dbReference>
<dbReference type="STRING" id="6239.T09A5.9.1"/>
<dbReference type="iPTMnet" id="P45969"/>
<dbReference type="PaxDb" id="6239-T09A5.9"/>
<dbReference type="PeptideAtlas" id="P45969"/>
<dbReference type="EnsemblMetazoa" id="T09A5.9.1">
    <property type="protein sequence ID" value="T09A5.9.1"/>
    <property type="gene ID" value="WBGene00011637"/>
</dbReference>
<dbReference type="GeneID" id="174266"/>
<dbReference type="KEGG" id="cel:CELE_T09A5.9"/>
<dbReference type="UCSC" id="T09A5.9.2">
    <property type="organism name" value="c. elegans"/>
</dbReference>
<dbReference type="AGR" id="WB:WBGene00011637"/>
<dbReference type="CTD" id="174266"/>
<dbReference type="WormBase" id="T09A5.9">
    <property type="protein sequence ID" value="CE01090"/>
    <property type="gene ID" value="WBGene00011637"/>
    <property type="gene designation" value="sds-22"/>
</dbReference>
<dbReference type="eggNOG" id="KOG0531">
    <property type="taxonomic scope" value="Eukaryota"/>
</dbReference>
<dbReference type="GeneTree" id="ENSGT00940000162473"/>
<dbReference type="HOGENOM" id="CLU_044236_0_0_1"/>
<dbReference type="InParanoid" id="P45969"/>
<dbReference type="OMA" id="EVWASYN"/>
<dbReference type="OrthoDB" id="7451790at2759"/>
<dbReference type="PhylomeDB" id="P45969"/>
<dbReference type="PRO" id="PR:P45969"/>
<dbReference type="Proteomes" id="UP000001940">
    <property type="component" value="Chromosome II"/>
</dbReference>
<dbReference type="Bgee" id="WBGene00011637">
    <property type="expression patterns" value="Expressed in germ line (C elegans) and 4 other cell types or tissues"/>
</dbReference>
<dbReference type="GO" id="GO:0005737">
    <property type="term" value="C:cytoplasm"/>
    <property type="evidence" value="ECO:0000318"/>
    <property type="project" value="GO_Central"/>
</dbReference>
<dbReference type="GO" id="GO:0005634">
    <property type="term" value="C:nucleus"/>
    <property type="evidence" value="ECO:0007669"/>
    <property type="project" value="UniProtKB-SubCell"/>
</dbReference>
<dbReference type="GO" id="GO:0046600">
    <property type="term" value="P:negative regulation of centriole replication"/>
    <property type="evidence" value="ECO:0000316"/>
    <property type="project" value="WormBase"/>
</dbReference>
<dbReference type="FunFam" id="3.80.10.10:FF:000055">
    <property type="entry name" value="Protein phosphatase 1 regulatory subunit 7"/>
    <property type="match status" value="1"/>
</dbReference>
<dbReference type="Gene3D" id="3.80.10.10">
    <property type="entry name" value="Ribonuclease Inhibitor"/>
    <property type="match status" value="2"/>
</dbReference>
<dbReference type="InterPro" id="IPR050576">
    <property type="entry name" value="Cilia_flagella_integrity"/>
</dbReference>
<dbReference type="InterPro" id="IPR001611">
    <property type="entry name" value="Leu-rich_rpt"/>
</dbReference>
<dbReference type="InterPro" id="IPR025875">
    <property type="entry name" value="Leu-rich_rpt_4"/>
</dbReference>
<dbReference type="InterPro" id="IPR003591">
    <property type="entry name" value="Leu-rich_rpt_typical-subtyp"/>
</dbReference>
<dbReference type="InterPro" id="IPR032675">
    <property type="entry name" value="LRR_dom_sf"/>
</dbReference>
<dbReference type="InterPro" id="IPR003603">
    <property type="entry name" value="U2A'_phosphoprotein32A_C"/>
</dbReference>
<dbReference type="PANTHER" id="PTHR45973:SF23">
    <property type="entry name" value="PROTEIN PHOSPHATASE 1 REGULATORY SUBUNIT 7"/>
    <property type="match status" value="1"/>
</dbReference>
<dbReference type="PANTHER" id="PTHR45973">
    <property type="entry name" value="PROTEIN PHOSPHATASE 1 REGULATORY SUBUNIT SDS22-RELATED"/>
    <property type="match status" value="1"/>
</dbReference>
<dbReference type="Pfam" id="PF12799">
    <property type="entry name" value="LRR_4"/>
    <property type="match status" value="1"/>
</dbReference>
<dbReference type="Pfam" id="PF14580">
    <property type="entry name" value="LRR_9"/>
    <property type="match status" value="1"/>
</dbReference>
<dbReference type="SMART" id="SM00365">
    <property type="entry name" value="LRR_SD22"/>
    <property type="match status" value="9"/>
</dbReference>
<dbReference type="SMART" id="SM00369">
    <property type="entry name" value="LRR_TYP"/>
    <property type="match status" value="5"/>
</dbReference>
<dbReference type="SMART" id="SM00446">
    <property type="entry name" value="LRRcap"/>
    <property type="match status" value="1"/>
</dbReference>
<dbReference type="SUPFAM" id="SSF52058">
    <property type="entry name" value="L domain-like"/>
    <property type="match status" value="1"/>
</dbReference>
<dbReference type="PROSITE" id="PS51450">
    <property type="entry name" value="LRR"/>
    <property type="match status" value="10"/>
</dbReference>
<accession>P45969</accession>
<reference key="1">
    <citation type="journal article" date="1998" name="Science">
        <title>Genome sequence of the nematode C. elegans: a platform for investigating biology.</title>
        <authorList>
            <consortium name="The C. elegans sequencing consortium"/>
        </authorList>
    </citation>
    <scope>NUCLEOTIDE SEQUENCE [LARGE SCALE GENOMIC DNA]</scope>
    <source>
        <strain>Bristol N2</strain>
    </source>
</reference>
<protein>
    <recommendedName>
        <fullName>Protein phosphatase 1 regulatory subunit SDS22 homolog</fullName>
    </recommendedName>
</protein>
<keyword id="KW-0433">Leucine-rich repeat</keyword>
<keyword id="KW-0539">Nucleus</keyword>
<keyword id="KW-1185">Reference proteome</keyword>
<keyword id="KW-0677">Repeat</keyword>
<gene>
    <name type="primary">sds-22</name>
    <name type="ORF">T09A5.9</name>
</gene>
<proteinExistence type="inferred from homology"/>
<comment type="function">
    <text evidence="1">Regulatory subunit of protein phosphatase 1.</text>
</comment>
<comment type="subcellular location">
    <subcellularLocation>
        <location evidence="1">Nucleus</location>
    </subcellularLocation>
</comment>
<comment type="similarity">
    <text evidence="3">Belongs to the SDS22 family.</text>
</comment>
<organism>
    <name type="scientific">Caenorhabditis elegans</name>
    <dbReference type="NCBI Taxonomy" id="6239"/>
    <lineage>
        <taxon>Eukaryota</taxon>
        <taxon>Metazoa</taxon>
        <taxon>Ecdysozoa</taxon>
        <taxon>Nematoda</taxon>
        <taxon>Chromadorea</taxon>
        <taxon>Rhabditida</taxon>
        <taxon>Rhabditina</taxon>
        <taxon>Rhabditomorpha</taxon>
        <taxon>Rhabditoidea</taxon>
        <taxon>Rhabditidae</taxon>
        <taxon>Peloderinae</taxon>
        <taxon>Caenorhabditis</taxon>
    </lineage>
</organism>